<gene>
    <name evidence="1" type="primary">rpmJ</name>
    <name type="ordered locus">lpg0350</name>
</gene>
<dbReference type="EMBL" id="AE017354">
    <property type="protein sequence ID" value="AAU26447.1"/>
    <property type="molecule type" value="Genomic_DNA"/>
</dbReference>
<dbReference type="RefSeq" id="WP_010946099.1">
    <property type="nucleotide sequence ID" value="NC_002942.5"/>
</dbReference>
<dbReference type="RefSeq" id="YP_094394.1">
    <property type="nucleotide sequence ID" value="NC_002942.5"/>
</dbReference>
<dbReference type="SMR" id="Q5ZYM2"/>
<dbReference type="STRING" id="272624.lpg0350"/>
<dbReference type="PaxDb" id="272624-lpg0350"/>
<dbReference type="GeneID" id="57034353"/>
<dbReference type="KEGG" id="lpn:lpg0350"/>
<dbReference type="PATRIC" id="fig|272624.6.peg.357"/>
<dbReference type="eggNOG" id="COG0257">
    <property type="taxonomic scope" value="Bacteria"/>
</dbReference>
<dbReference type="HOGENOM" id="CLU_135723_6_2_6"/>
<dbReference type="OrthoDB" id="9802520at2"/>
<dbReference type="Proteomes" id="UP000000609">
    <property type="component" value="Chromosome"/>
</dbReference>
<dbReference type="GO" id="GO:0005737">
    <property type="term" value="C:cytoplasm"/>
    <property type="evidence" value="ECO:0007669"/>
    <property type="project" value="UniProtKB-ARBA"/>
</dbReference>
<dbReference type="GO" id="GO:1990904">
    <property type="term" value="C:ribonucleoprotein complex"/>
    <property type="evidence" value="ECO:0007669"/>
    <property type="project" value="UniProtKB-KW"/>
</dbReference>
<dbReference type="GO" id="GO:0005840">
    <property type="term" value="C:ribosome"/>
    <property type="evidence" value="ECO:0007669"/>
    <property type="project" value="UniProtKB-KW"/>
</dbReference>
<dbReference type="GO" id="GO:0003735">
    <property type="term" value="F:structural constituent of ribosome"/>
    <property type="evidence" value="ECO:0007669"/>
    <property type="project" value="InterPro"/>
</dbReference>
<dbReference type="GO" id="GO:0006412">
    <property type="term" value="P:translation"/>
    <property type="evidence" value="ECO:0007669"/>
    <property type="project" value="UniProtKB-UniRule"/>
</dbReference>
<dbReference type="HAMAP" id="MF_00251">
    <property type="entry name" value="Ribosomal_bL36"/>
    <property type="match status" value="1"/>
</dbReference>
<dbReference type="InterPro" id="IPR000473">
    <property type="entry name" value="Ribosomal_bL36"/>
</dbReference>
<dbReference type="InterPro" id="IPR035977">
    <property type="entry name" value="Ribosomal_bL36_sp"/>
</dbReference>
<dbReference type="NCBIfam" id="TIGR01022">
    <property type="entry name" value="rpmJ_bact"/>
    <property type="match status" value="1"/>
</dbReference>
<dbReference type="PANTHER" id="PTHR42888">
    <property type="entry name" value="50S RIBOSOMAL PROTEIN L36, CHLOROPLASTIC"/>
    <property type="match status" value="1"/>
</dbReference>
<dbReference type="PANTHER" id="PTHR42888:SF1">
    <property type="entry name" value="LARGE RIBOSOMAL SUBUNIT PROTEIN BL36C"/>
    <property type="match status" value="1"/>
</dbReference>
<dbReference type="Pfam" id="PF00444">
    <property type="entry name" value="Ribosomal_L36"/>
    <property type="match status" value="1"/>
</dbReference>
<dbReference type="SUPFAM" id="SSF57840">
    <property type="entry name" value="Ribosomal protein L36"/>
    <property type="match status" value="1"/>
</dbReference>
<dbReference type="PROSITE" id="PS00828">
    <property type="entry name" value="RIBOSOMAL_L36"/>
    <property type="match status" value="1"/>
</dbReference>
<proteinExistence type="inferred from homology"/>
<protein>
    <recommendedName>
        <fullName evidence="1">Large ribosomal subunit protein bL36</fullName>
    </recommendedName>
    <alternativeName>
        <fullName evidence="2">50S ribosomal protein L36</fullName>
    </alternativeName>
</protein>
<name>RL36_LEGPH</name>
<feature type="chain" id="PRO_0000126201" description="Large ribosomal subunit protein bL36">
    <location>
        <begin position="1"/>
        <end position="37"/>
    </location>
</feature>
<organism>
    <name type="scientific">Legionella pneumophila subsp. pneumophila (strain Philadelphia 1 / ATCC 33152 / DSM 7513)</name>
    <dbReference type="NCBI Taxonomy" id="272624"/>
    <lineage>
        <taxon>Bacteria</taxon>
        <taxon>Pseudomonadati</taxon>
        <taxon>Pseudomonadota</taxon>
        <taxon>Gammaproteobacteria</taxon>
        <taxon>Legionellales</taxon>
        <taxon>Legionellaceae</taxon>
        <taxon>Legionella</taxon>
    </lineage>
</organism>
<sequence>MKVRASVKRICRNCKIIKRSGTIRVICKDARHKQKQG</sequence>
<comment type="similarity">
    <text evidence="1">Belongs to the bacterial ribosomal protein bL36 family.</text>
</comment>
<reference key="1">
    <citation type="journal article" date="2004" name="Science">
        <title>The genomic sequence of the accidental pathogen Legionella pneumophila.</title>
        <authorList>
            <person name="Chien M."/>
            <person name="Morozova I."/>
            <person name="Shi S."/>
            <person name="Sheng H."/>
            <person name="Chen J."/>
            <person name="Gomez S.M."/>
            <person name="Asamani G."/>
            <person name="Hill K."/>
            <person name="Nuara J."/>
            <person name="Feder M."/>
            <person name="Rineer J."/>
            <person name="Greenberg J.J."/>
            <person name="Steshenko V."/>
            <person name="Park S.H."/>
            <person name="Zhao B."/>
            <person name="Teplitskaya E."/>
            <person name="Edwards J.R."/>
            <person name="Pampou S."/>
            <person name="Georghiou A."/>
            <person name="Chou I.-C."/>
            <person name="Iannuccilli W."/>
            <person name="Ulz M.E."/>
            <person name="Kim D.H."/>
            <person name="Geringer-Sameth A."/>
            <person name="Goldsberry C."/>
            <person name="Morozov P."/>
            <person name="Fischer S.G."/>
            <person name="Segal G."/>
            <person name="Qu X."/>
            <person name="Rzhetsky A."/>
            <person name="Zhang P."/>
            <person name="Cayanis E."/>
            <person name="De Jong P.J."/>
            <person name="Ju J."/>
            <person name="Kalachikov S."/>
            <person name="Shuman H.A."/>
            <person name="Russo J.J."/>
        </authorList>
    </citation>
    <scope>NUCLEOTIDE SEQUENCE [LARGE SCALE GENOMIC DNA]</scope>
    <source>
        <strain>Philadelphia 1 / ATCC 33152 / DSM 7513</strain>
    </source>
</reference>
<evidence type="ECO:0000255" key="1">
    <source>
        <dbReference type="HAMAP-Rule" id="MF_00251"/>
    </source>
</evidence>
<evidence type="ECO:0000305" key="2"/>
<keyword id="KW-1185">Reference proteome</keyword>
<keyword id="KW-0687">Ribonucleoprotein</keyword>
<keyword id="KW-0689">Ribosomal protein</keyword>
<accession>Q5ZYM2</accession>